<comment type="function">
    <text evidence="1">Catalyzes the dephosphorylation of undecaprenyl diphosphate (UPP). Confers resistance to bacitracin.</text>
</comment>
<comment type="catalytic activity">
    <reaction evidence="1">
        <text>di-trans,octa-cis-undecaprenyl diphosphate + H2O = di-trans,octa-cis-undecaprenyl phosphate + phosphate + H(+)</text>
        <dbReference type="Rhea" id="RHEA:28094"/>
        <dbReference type="ChEBI" id="CHEBI:15377"/>
        <dbReference type="ChEBI" id="CHEBI:15378"/>
        <dbReference type="ChEBI" id="CHEBI:43474"/>
        <dbReference type="ChEBI" id="CHEBI:58405"/>
        <dbReference type="ChEBI" id="CHEBI:60392"/>
        <dbReference type="EC" id="3.6.1.27"/>
    </reaction>
</comment>
<comment type="subcellular location">
    <subcellularLocation>
        <location evidence="1">Cell inner membrane</location>
        <topology evidence="1">Multi-pass membrane protein</topology>
    </subcellularLocation>
</comment>
<comment type="miscellaneous">
    <text>Bacitracin is thought to be involved in the inhibition of peptidoglycan synthesis by sequestering undecaprenyl diphosphate, thereby reducing the pool of lipid carrier available.</text>
</comment>
<comment type="similarity">
    <text evidence="1">Belongs to the UppP family.</text>
</comment>
<feature type="chain" id="PRO_0000227606" description="Undecaprenyl-diphosphatase">
    <location>
        <begin position="1"/>
        <end position="294"/>
    </location>
</feature>
<feature type="transmembrane region" description="Helical" evidence="1">
    <location>
        <begin position="2"/>
        <end position="22"/>
    </location>
</feature>
<feature type="transmembrane region" description="Helical" evidence="1">
    <location>
        <begin position="27"/>
        <end position="47"/>
    </location>
</feature>
<feature type="transmembrane region" description="Helical" evidence="1">
    <location>
        <begin position="65"/>
        <end position="85"/>
    </location>
</feature>
<feature type="transmembrane region" description="Helical" evidence="1">
    <location>
        <begin position="110"/>
        <end position="130"/>
    </location>
</feature>
<feature type="transmembrane region" description="Helical" evidence="1">
    <location>
        <begin position="135"/>
        <end position="155"/>
    </location>
</feature>
<feature type="transmembrane region" description="Helical" evidence="1">
    <location>
        <begin position="172"/>
        <end position="192"/>
    </location>
</feature>
<feature type="transmembrane region" description="Helical" evidence="1">
    <location>
        <begin position="215"/>
        <end position="235"/>
    </location>
</feature>
<feature type="transmembrane region" description="Helical" evidence="1">
    <location>
        <begin position="239"/>
        <end position="259"/>
    </location>
</feature>
<feature type="transmembrane region" description="Helical" evidence="1">
    <location>
        <begin position="272"/>
        <end position="292"/>
    </location>
</feature>
<gene>
    <name evidence="1" type="primary">uppP</name>
    <name type="synonym">bacA</name>
    <name type="ordered locus">BPEN_063</name>
</gene>
<keyword id="KW-0046">Antibiotic resistance</keyword>
<keyword id="KW-0997">Cell inner membrane</keyword>
<keyword id="KW-1003">Cell membrane</keyword>
<keyword id="KW-0133">Cell shape</keyword>
<keyword id="KW-0961">Cell wall biogenesis/degradation</keyword>
<keyword id="KW-0378">Hydrolase</keyword>
<keyword id="KW-0472">Membrane</keyword>
<keyword id="KW-0573">Peptidoglycan synthesis</keyword>
<keyword id="KW-1185">Reference proteome</keyword>
<keyword id="KW-0812">Transmembrane</keyword>
<keyword id="KW-1133">Transmembrane helix</keyword>
<proteinExistence type="inferred from homology"/>
<protein>
    <recommendedName>
        <fullName evidence="1">Undecaprenyl-diphosphatase</fullName>
        <ecNumber evidence="1">3.6.1.27</ecNumber>
    </recommendedName>
    <alternativeName>
        <fullName evidence="1">Bacitracin resistance protein</fullName>
    </alternativeName>
    <alternativeName>
        <fullName evidence="1">Undecaprenyl pyrophosphate phosphatase</fullName>
    </alternativeName>
</protein>
<evidence type="ECO:0000255" key="1">
    <source>
        <dbReference type="HAMAP-Rule" id="MF_01006"/>
    </source>
</evidence>
<reference key="1">
    <citation type="journal article" date="2005" name="Genome Res.">
        <title>Genome sequence of Blochmannia pennsylvanicus indicates parallel evolutionary trends among bacterial mutualists of insects.</title>
        <authorList>
            <person name="Degnan P.H."/>
            <person name="Lazarus A.B."/>
            <person name="Wernegreen J.J."/>
        </authorList>
    </citation>
    <scope>NUCLEOTIDE SEQUENCE [LARGE SCALE GENOMIC DNA]</scope>
    <source>
        <strain>BPEN</strain>
    </source>
</reference>
<dbReference type="EC" id="3.6.1.27" evidence="1"/>
<dbReference type="EMBL" id="CP000016">
    <property type="protein sequence ID" value="AAZ40709.1"/>
    <property type="molecule type" value="Genomic_DNA"/>
</dbReference>
<dbReference type="RefSeq" id="WP_011282615.1">
    <property type="nucleotide sequence ID" value="NC_007292.1"/>
</dbReference>
<dbReference type="SMR" id="Q493X5"/>
<dbReference type="STRING" id="291272.BPEN_063"/>
<dbReference type="KEGG" id="bpn:BPEN_063"/>
<dbReference type="eggNOG" id="COG1968">
    <property type="taxonomic scope" value="Bacteria"/>
</dbReference>
<dbReference type="HOGENOM" id="CLU_060296_2_0_6"/>
<dbReference type="OrthoDB" id="9808289at2"/>
<dbReference type="Proteomes" id="UP000007794">
    <property type="component" value="Chromosome"/>
</dbReference>
<dbReference type="GO" id="GO:0005886">
    <property type="term" value="C:plasma membrane"/>
    <property type="evidence" value="ECO:0007669"/>
    <property type="project" value="UniProtKB-SubCell"/>
</dbReference>
<dbReference type="GO" id="GO:0050380">
    <property type="term" value="F:undecaprenyl-diphosphatase activity"/>
    <property type="evidence" value="ECO:0007669"/>
    <property type="project" value="UniProtKB-UniRule"/>
</dbReference>
<dbReference type="GO" id="GO:0071555">
    <property type="term" value="P:cell wall organization"/>
    <property type="evidence" value="ECO:0007669"/>
    <property type="project" value="UniProtKB-KW"/>
</dbReference>
<dbReference type="GO" id="GO:0009252">
    <property type="term" value="P:peptidoglycan biosynthetic process"/>
    <property type="evidence" value="ECO:0007669"/>
    <property type="project" value="UniProtKB-KW"/>
</dbReference>
<dbReference type="GO" id="GO:0008360">
    <property type="term" value="P:regulation of cell shape"/>
    <property type="evidence" value="ECO:0007669"/>
    <property type="project" value="UniProtKB-KW"/>
</dbReference>
<dbReference type="GO" id="GO:0046677">
    <property type="term" value="P:response to antibiotic"/>
    <property type="evidence" value="ECO:0007669"/>
    <property type="project" value="UniProtKB-UniRule"/>
</dbReference>
<dbReference type="HAMAP" id="MF_01006">
    <property type="entry name" value="Undec_diphosphatase"/>
    <property type="match status" value="1"/>
</dbReference>
<dbReference type="InterPro" id="IPR003824">
    <property type="entry name" value="UppP"/>
</dbReference>
<dbReference type="NCBIfam" id="TIGR00753">
    <property type="entry name" value="undec_PP_bacA"/>
    <property type="match status" value="1"/>
</dbReference>
<dbReference type="PANTHER" id="PTHR30622">
    <property type="entry name" value="UNDECAPRENYL-DIPHOSPHATASE"/>
    <property type="match status" value="1"/>
</dbReference>
<dbReference type="PANTHER" id="PTHR30622:SF3">
    <property type="entry name" value="UNDECAPRENYL-DIPHOSPHATASE"/>
    <property type="match status" value="1"/>
</dbReference>
<dbReference type="Pfam" id="PF02673">
    <property type="entry name" value="BacA"/>
    <property type="match status" value="1"/>
</dbReference>
<name>UPPP_BLOPB</name>
<sequence length="294" mass="32957">MSMIYITLNIIAYVIDVRSLILDVRRLVFSLILGIVEGLTEFLPISSTGHMILVENILNCMDDSVIAFTVIIQLGAILSITKIFWSQLYGMSMICIKKIFFKQHDDHNHLCIRHIFLGTFPGIMLGMIFYEKIGLIFELTYIMYGLIIGGIFLLVGELCASKEPRVSRINNITYLQAFLIGCFQCLAFWPGFSRAGATIGGGLVVGLDRRISSEFSFFLAVPIIFGSAVLTLYHYRSCIGLMDVLLLIAGSATAFFIALFTVRYFLKIVKNVSLIPFAIYRFLLAGGIYWGLMT</sequence>
<organism>
    <name type="scientific">Blochmanniella pennsylvanica (strain BPEN)</name>
    <dbReference type="NCBI Taxonomy" id="291272"/>
    <lineage>
        <taxon>Bacteria</taxon>
        <taxon>Pseudomonadati</taxon>
        <taxon>Pseudomonadota</taxon>
        <taxon>Gammaproteobacteria</taxon>
        <taxon>Enterobacterales</taxon>
        <taxon>Enterobacteriaceae</taxon>
        <taxon>ant endosymbionts</taxon>
        <taxon>Candidatus Blochmanniella</taxon>
    </lineage>
</organism>
<accession>Q493X5</accession>